<proteinExistence type="evidence at protein level"/>
<evidence type="ECO:0000250" key="1">
    <source>
        <dbReference type="UniProtKB" id="P33261"/>
    </source>
</evidence>
<evidence type="ECO:0000269" key="2">
    <source>
    </source>
</evidence>
<evidence type="ECO:0000269" key="3">
    <source>
    </source>
</evidence>
<evidence type="ECO:0000269" key="4">
    <source>
    </source>
</evidence>
<evidence type="ECO:0000269" key="5">
    <source>
    </source>
</evidence>
<evidence type="ECO:0000303" key="6">
    <source>
    </source>
</evidence>
<evidence type="ECO:0000305" key="7"/>
<evidence type="ECO:0000305" key="8">
    <source>
    </source>
</evidence>
<evidence type="ECO:0000305" key="9">
    <source>
    </source>
</evidence>
<evidence type="ECO:0000305" key="10">
    <source>
    </source>
</evidence>
<accession>P08683</accession>
<accession>Q63141</accession>
<accession>Q64554</accession>
<sequence>MDPVLVLVLTLSSLLLLSLWRQSFGRGKLPPGPTPLPIIGNTLQIYMKDIGQSIKKFSKVYGPIFTLYLGMKPFVVLHGYEAVKEALVDLGEEFSGRGSFPVSERVNKGLGVIFSNGMQWKEIRRFSIMTLRTFGMGKRTIEDRIQEEAQCLVEELRKSKGAPFDPTFILGCAPCNVICSIIFQNRFDYKDPTFLNLMHRFNENFRLFSSPWLQVCNTFPAIIDYFPGSHNQVLKNFFYIKNYVLEKVKEHQESLDKDNPRDFIDCFLNKMEQEKHNPQSEFTLESLVATVTDMFGAGTETTSTTLRYGLLLLLKHVDVTAKVQEEIERVIGRNRSPCMKDRSQMPYTDAVVHEIQRYIDLVPTNLPHLVTRDIKFRNYFIPKGTNVIVSLSSILHDDKEFPNPEKFDPGHFLDERGNFKKSDYFMPFSAGKRICAGEALARTELFLFFTTILQNFNLKSLVDVKDIDTTPAISGFGHLPPFYEACFIPVQRADSLSSHL</sequence>
<name>CP2CB_RAT</name>
<feature type="chain" id="PRO_0000051701" description="Cytochrome P450 2C11">
    <location>
        <begin position="1"/>
        <end position="500"/>
    </location>
</feature>
<feature type="binding site" description="axial binding residue" evidence="1">
    <location>
        <position position="435"/>
    </location>
    <ligand>
        <name>heme</name>
        <dbReference type="ChEBI" id="CHEBI:30413"/>
    </ligand>
    <ligandPart>
        <name>Fe</name>
        <dbReference type="ChEBI" id="CHEBI:18248"/>
    </ligandPart>
</feature>
<feature type="sequence variant" description="In strain: Wistar Gunn." evidence="5">
    <original>V</original>
    <variation>A</variation>
    <location>
        <position position="4"/>
    </location>
</feature>
<feature type="sequence variant" description="In strain: Wistar Gunn." evidence="5">
    <original>N</original>
    <variation>S</variation>
    <location>
        <position position="116"/>
    </location>
</feature>
<feature type="sequence variant" description="In strain: Wistar Gunn." evidence="5">
    <original>F</original>
    <variation>L</variation>
    <location>
        <position position="187"/>
    </location>
</feature>
<feature type="sequence conflict" description="In Ref. 2; AAA41007." evidence="7" ref="2">
    <original>R</original>
    <variation>H</variation>
    <location>
        <position position="329"/>
    </location>
</feature>
<keyword id="KW-0903">Direct protein sequencing</keyword>
<keyword id="KW-0256">Endoplasmic reticulum</keyword>
<keyword id="KW-0276">Fatty acid metabolism</keyword>
<keyword id="KW-0349">Heme</keyword>
<keyword id="KW-0408">Iron</keyword>
<keyword id="KW-0443">Lipid metabolism</keyword>
<keyword id="KW-0472">Membrane</keyword>
<keyword id="KW-0479">Metal-binding</keyword>
<keyword id="KW-0492">Microsome</keyword>
<keyword id="KW-0503">Monooxygenase</keyword>
<keyword id="KW-0560">Oxidoreductase</keyword>
<keyword id="KW-1185">Reference proteome</keyword>
<keyword id="KW-0753">Steroid metabolism</keyword>
<protein>
    <recommendedName>
        <fullName>Cytochrome P450 2C11</fullName>
        <ecNumber evidence="2 4">1.14.14.1</ecNumber>
    </recommendedName>
    <alternativeName>
        <fullName>CYPIIC11</fullName>
    </alternativeName>
    <alternativeName>
        <fullName evidence="6">Cytochrome P-450(M-1)</fullName>
    </alternativeName>
    <alternativeName>
        <fullName>Cytochrome P450-UT-2</fullName>
    </alternativeName>
    <alternativeName>
        <fullName>Cytochrome P450-UT-A</fullName>
    </alternativeName>
    <alternativeName>
        <fullName>Cytochrome P450H</fullName>
    </alternativeName>
</protein>
<dbReference type="EC" id="1.14.14.1" evidence="2 4"/>
<dbReference type="EMBL" id="J02657">
    <property type="protein sequence ID" value="AAA41062.1"/>
    <property type="molecule type" value="mRNA"/>
</dbReference>
<dbReference type="EMBL" id="M18363">
    <property type="protein sequence ID" value="AAA41007.1"/>
    <property type="molecule type" value="Genomic_DNA"/>
</dbReference>
<dbReference type="EMBL" id="M18356">
    <property type="protein sequence ID" value="AAA41007.1"/>
    <property type="status" value="JOINED"/>
    <property type="molecule type" value="Genomic_DNA"/>
</dbReference>
<dbReference type="EMBL" id="M18357">
    <property type="protein sequence ID" value="AAA41007.1"/>
    <property type="status" value="JOINED"/>
    <property type="molecule type" value="Genomic_DNA"/>
</dbReference>
<dbReference type="EMBL" id="M18359">
    <property type="protein sequence ID" value="AAA41007.1"/>
    <property type="status" value="JOINED"/>
    <property type="molecule type" value="Genomic_DNA"/>
</dbReference>
<dbReference type="EMBL" id="M18360">
    <property type="protein sequence ID" value="AAA41007.1"/>
    <property type="status" value="JOINED"/>
    <property type="molecule type" value="Genomic_DNA"/>
</dbReference>
<dbReference type="EMBL" id="M18361">
    <property type="protein sequence ID" value="AAA41007.1"/>
    <property type="status" value="JOINED"/>
    <property type="molecule type" value="Genomic_DNA"/>
</dbReference>
<dbReference type="EMBL" id="M18362">
    <property type="protein sequence ID" value="AAA41007.1"/>
    <property type="status" value="JOINED"/>
    <property type="molecule type" value="Genomic_DNA"/>
</dbReference>
<dbReference type="EMBL" id="U33173">
    <property type="protein sequence ID" value="AAB02144.1"/>
    <property type="molecule type" value="mRNA"/>
</dbReference>
<dbReference type="EMBL" id="BC088146">
    <property type="protein sequence ID" value="AAH88146.1"/>
    <property type="molecule type" value="mRNA"/>
</dbReference>
<dbReference type="EMBL" id="X79081">
    <property type="protein sequence ID" value="CAA55686.3"/>
    <property type="molecule type" value="Genomic_DNA"/>
</dbReference>
<dbReference type="PIR" id="A26685">
    <property type="entry name" value="A26685"/>
</dbReference>
<dbReference type="PIR" id="S62785">
    <property type="entry name" value="S62785"/>
</dbReference>
<dbReference type="RefSeq" id="NP_062057.2">
    <property type="nucleotide sequence ID" value="NM_019184.2"/>
</dbReference>
<dbReference type="SMR" id="P08683"/>
<dbReference type="FunCoup" id="P08683">
    <property type="interactions" value="59"/>
</dbReference>
<dbReference type="STRING" id="10116.ENSRNOP00000074503"/>
<dbReference type="BindingDB" id="P08683"/>
<dbReference type="ChEMBL" id="CHEMBL4971"/>
<dbReference type="DrugBank" id="DB13746">
    <property type="generic name" value="Bioallethrin"/>
</dbReference>
<dbReference type="DrugBank" id="DB00266">
    <property type="generic name" value="Dicoumarol"/>
</dbReference>
<dbReference type="SwissLipids" id="SLP:000001687"/>
<dbReference type="GlyGen" id="P08683">
    <property type="glycosylation" value="1 site"/>
</dbReference>
<dbReference type="iPTMnet" id="P08683"/>
<dbReference type="PhosphoSitePlus" id="P08683"/>
<dbReference type="PaxDb" id="10116-ENSRNOP00000017310"/>
<dbReference type="Ensembl" id="ENSRNOT00000088853.2">
    <property type="protein sequence ID" value="ENSRNOP00000074503.2"/>
    <property type="gene ID" value="ENSRNOG00000052810.2"/>
</dbReference>
<dbReference type="GeneID" id="29277"/>
<dbReference type="KEGG" id="rno:29277"/>
<dbReference type="AGR" id="RGD:2469"/>
<dbReference type="CTD" id="29277"/>
<dbReference type="RGD" id="2469">
    <property type="gene designation" value="Cyp2c11"/>
</dbReference>
<dbReference type="eggNOG" id="KOG0156">
    <property type="taxonomic scope" value="Eukaryota"/>
</dbReference>
<dbReference type="GeneTree" id="ENSGT00940000162913"/>
<dbReference type="InParanoid" id="P08683"/>
<dbReference type="OMA" id="ACKEAMR"/>
<dbReference type="OrthoDB" id="1103324at2759"/>
<dbReference type="PhylomeDB" id="P08683"/>
<dbReference type="TreeFam" id="TF352043"/>
<dbReference type="BRENDA" id="1.14.14.1">
    <property type="organism ID" value="5301"/>
</dbReference>
<dbReference type="BRENDA" id="1.14.14.24">
    <property type="organism ID" value="5301"/>
</dbReference>
<dbReference type="SABIO-RK" id="P08683"/>
<dbReference type="UniPathway" id="UPA00383"/>
<dbReference type="PRO" id="PR:P08683"/>
<dbReference type="Proteomes" id="UP000002494">
    <property type="component" value="Chromosome 1"/>
</dbReference>
<dbReference type="GO" id="GO:0005737">
    <property type="term" value="C:cytoplasm"/>
    <property type="evidence" value="ECO:0000318"/>
    <property type="project" value="GO_Central"/>
</dbReference>
<dbReference type="GO" id="GO:0005789">
    <property type="term" value="C:endoplasmic reticulum membrane"/>
    <property type="evidence" value="ECO:0000314"/>
    <property type="project" value="UniProtKB"/>
</dbReference>
<dbReference type="GO" id="GO:0043231">
    <property type="term" value="C:intracellular membrane-bounded organelle"/>
    <property type="evidence" value="ECO:0000318"/>
    <property type="project" value="GO_Central"/>
</dbReference>
<dbReference type="GO" id="GO:0008405">
    <property type="term" value="F:arachidonate 11,12-epoxygenase activity"/>
    <property type="evidence" value="ECO:0000314"/>
    <property type="project" value="UniProtKB"/>
</dbReference>
<dbReference type="GO" id="GO:0008404">
    <property type="term" value="F:arachidonate 14,15-epoxygenase activity"/>
    <property type="evidence" value="ECO:0000314"/>
    <property type="project" value="UniProtKB"/>
</dbReference>
<dbReference type="GO" id="GO:0020037">
    <property type="term" value="F:heme binding"/>
    <property type="evidence" value="ECO:0000318"/>
    <property type="project" value="GO_Central"/>
</dbReference>
<dbReference type="GO" id="GO:0005506">
    <property type="term" value="F:iron ion binding"/>
    <property type="evidence" value="ECO:0007669"/>
    <property type="project" value="InterPro"/>
</dbReference>
<dbReference type="GO" id="GO:0004497">
    <property type="term" value="F:monooxygenase activity"/>
    <property type="evidence" value="ECO:0000314"/>
    <property type="project" value="UniProtKB"/>
</dbReference>
<dbReference type="GO" id="GO:0016712">
    <property type="term" value="F:oxidoreductase activity, acting on paired donors, with incorporation or reduction of molecular oxygen, reduced flavin or flavoprotein as one donor, and incorporation of one atom of oxygen"/>
    <property type="evidence" value="ECO:0000318"/>
    <property type="project" value="GO_Central"/>
</dbReference>
<dbReference type="GO" id="GO:0008401">
    <property type="term" value="F:retinoic acid 4-hydroxylase activity"/>
    <property type="evidence" value="ECO:0000266"/>
    <property type="project" value="RGD"/>
</dbReference>
<dbReference type="GO" id="GO:0008390">
    <property type="term" value="F:testosterone 16-alpha-hydroxylase activity"/>
    <property type="evidence" value="ECO:0000314"/>
    <property type="project" value="UniProtKB"/>
</dbReference>
<dbReference type="GO" id="GO:0019373">
    <property type="term" value="P:epoxygenase P450 pathway"/>
    <property type="evidence" value="ECO:0000314"/>
    <property type="project" value="UniProtKB"/>
</dbReference>
<dbReference type="GO" id="GO:0046456">
    <property type="term" value="P:icosanoid biosynthetic process"/>
    <property type="evidence" value="ECO:0000314"/>
    <property type="project" value="UniProtKB"/>
</dbReference>
<dbReference type="GO" id="GO:0006082">
    <property type="term" value="P:organic acid metabolic process"/>
    <property type="evidence" value="ECO:0000318"/>
    <property type="project" value="GO_Central"/>
</dbReference>
<dbReference type="GO" id="GO:0042573">
    <property type="term" value="P:retinoic acid metabolic process"/>
    <property type="evidence" value="ECO:0000266"/>
    <property type="project" value="RGD"/>
</dbReference>
<dbReference type="GO" id="GO:0008202">
    <property type="term" value="P:steroid metabolic process"/>
    <property type="evidence" value="ECO:0007669"/>
    <property type="project" value="UniProtKB-KW"/>
</dbReference>
<dbReference type="GO" id="GO:0006805">
    <property type="term" value="P:xenobiotic metabolic process"/>
    <property type="evidence" value="ECO:0000318"/>
    <property type="project" value="GO_Central"/>
</dbReference>
<dbReference type="CDD" id="cd20665">
    <property type="entry name" value="CYP2C-like"/>
    <property type="match status" value="1"/>
</dbReference>
<dbReference type="FunFam" id="1.10.630.10:FF:000299">
    <property type="entry name" value="Cytochrome P450 2C9"/>
    <property type="match status" value="1"/>
</dbReference>
<dbReference type="Gene3D" id="1.10.630.10">
    <property type="entry name" value="Cytochrome P450"/>
    <property type="match status" value="1"/>
</dbReference>
<dbReference type="InterPro" id="IPR001128">
    <property type="entry name" value="Cyt_P450"/>
</dbReference>
<dbReference type="InterPro" id="IPR017972">
    <property type="entry name" value="Cyt_P450_CS"/>
</dbReference>
<dbReference type="InterPro" id="IPR002401">
    <property type="entry name" value="Cyt_P450_E_grp-I"/>
</dbReference>
<dbReference type="InterPro" id="IPR008068">
    <property type="entry name" value="Cyt_P450_E_grp-I_CYP2B-like"/>
</dbReference>
<dbReference type="InterPro" id="IPR036396">
    <property type="entry name" value="Cyt_P450_sf"/>
</dbReference>
<dbReference type="InterPro" id="IPR050182">
    <property type="entry name" value="Cytochrome_P450_fam2"/>
</dbReference>
<dbReference type="PANTHER" id="PTHR24300:SF400">
    <property type="entry name" value="CYTOCHROME P450 2C9"/>
    <property type="match status" value="1"/>
</dbReference>
<dbReference type="PANTHER" id="PTHR24300">
    <property type="entry name" value="CYTOCHROME P450 508A4-RELATED"/>
    <property type="match status" value="1"/>
</dbReference>
<dbReference type="Pfam" id="PF00067">
    <property type="entry name" value="p450"/>
    <property type="match status" value="1"/>
</dbReference>
<dbReference type="PRINTS" id="PR00463">
    <property type="entry name" value="EP450I"/>
</dbReference>
<dbReference type="PRINTS" id="PR01685">
    <property type="entry name" value="EP450ICYP2B"/>
</dbReference>
<dbReference type="PRINTS" id="PR00385">
    <property type="entry name" value="P450"/>
</dbReference>
<dbReference type="SUPFAM" id="SSF48264">
    <property type="entry name" value="Cytochrome P450"/>
    <property type="match status" value="1"/>
</dbReference>
<dbReference type="PROSITE" id="PS00086">
    <property type="entry name" value="CYTOCHROME_P450"/>
    <property type="match status" value="1"/>
</dbReference>
<gene>
    <name type="primary">Cyp2c11</name>
    <name type="synonym">Cyp2c</name>
    <name type="synonym">Cyp2c-11</name>
</gene>
<organism>
    <name type="scientific">Rattus norvegicus</name>
    <name type="common">Rat</name>
    <dbReference type="NCBI Taxonomy" id="10116"/>
    <lineage>
        <taxon>Eukaryota</taxon>
        <taxon>Metazoa</taxon>
        <taxon>Chordata</taxon>
        <taxon>Craniata</taxon>
        <taxon>Vertebrata</taxon>
        <taxon>Euteleostomi</taxon>
        <taxon>Mammalia</taxon>
        <taxon>Eutheria</taxon>
        <taxon>Euarchontoglires</taxon>
        <taxon>Glires</taxon>
        <taxon>Rodentia</taxon>
        <taxon>Myomorpha</taxon>
        <taxon>Muroidea</taxon>
        <taxon>Muridae</taxon>
        <taxon>Murinae</taxon>
        <taxon>Rattus</taxon>
    </lineage>
</organism>
<reference key="1">
    <citation type="journal article" date="1987" name="J. Biol. Chem.">
        <title>Structural analysis and specific expression of microsomal cytochrome P-450(M-1) mRNA in male rat livers.</title>
        <authorList>
            <person name="Yoshioka H."/>
            <person name="Morohashi K."/>
            <person name="Sogawa K."/>
            <person name="Miyata T."/>
            <person name="Kawajiri K."/>
            <person name="Hirose T."/>
            <person name="Inayama S."/>
            <person name="Fujii-Kuriyama Y."/>
            <person name="Omura T."/>
        </authorList>
    </citation>
    <scope>NUCLEOTIDE SEQUENCE [MRNA]</scope>
</reference>
<reference key="2">
    <citation type="journal article" date="1987" name="Biochemistry">
        <title>Gene structure of cytochrome P-450(M-1) specifically expressed in male rat liver.</title>
        <authorList>
            <person name="Morishima N."/>
            <person name="Yoshioka H."/>
            <person name="Higashi Y."/>
            <person name="Sogawa K."/>
            <person name="Fujii-Kuriyama Y."/>
        </authorList>
    </citation>
    <scope>NUCLEOTIDE SEQUENCE [GENOMIC DNA]</scope>
</reference>
<reference key="3">
    <citation type="journal article" date="1988" name="Acta Endocrinol.">
        <title>Cloning and pretranslational hormonal regulation of testosterone 16 alpha-hydroxylase (P-45016 alpha) in male rat liver.</title>
        <authorList>
            <person name="Stroem A."/>
            <person name="Mode A."/>
            <person name="Zaphiropoulos P.G."/>
            <person name="Nilsson A.G."/>
            <person name="Morgan E."/>
            <person name="Gustafsson J.-A."/>
        </authorList>
    </citation>
    <scope>NUCLEOTIDE SEQUENCE [MRNA]</scope>
    <source>
        <tissue>Liver</tissue>
    </source>
</reference>
<reference key="4">
    <citation type="journal article" date="1996" name="Arch. Biochem. Biophys.">
        <title>cDNA-directed expression of two allelic variants of cytochrome P450 2C11 using COS1 and SF21 insect cells.</title>
        <authorList>
            <person name="Biagini C."/>
            <person name="Celier C."/>
        </authorList>
    </citation>
    <scope>NUCLEOTIDE SEQUENCE [MRNA]</scope>
    <scope>VARIANTS ALA-4; SER-116 AND LEU-187</scope>
    <source>
        <strain>Wistar Gunn</strain>
        <tissue>Liver</tissue>
    </source>
</reference>
<reference key="5">
    <citation type="journal article" date="1988" name="Acta Med. Scand. Suppl.">
        <title>Sequence and regulation of two growth-hormone-controlled, sex-specific isozymes of cytochrome P-450 in rat liver, P-450(15)beta and P-450(16)alpha.</title>
        <authorList>
            <person name="Zaphiropoulos P.G."/>
            <person name="Mode A."/>
            <person name="Stroem A."/>
            <person name="Husman B."/>
            <person name="Andersson G."/>
            <person name="Gustafsson J.-A."/>
        </authorList>
    </citation>
    <scope>NUCLEOTIDE SEQUENCE [MRNA]</scope>
</reference>
<reference key="6">
    <citation type="journal article" date="2004" name="Genome Res.">
        <title>The status, quality, and expansion of the NIH full-length cDNA project: the Mammalian Gene Collection (MGC).</title>
        <authorList>
            <consortium name="The MGC Project Team"/>
        </authorList>
    </citation>
    <scope>NUCLEOTIDE SEQUENCE [LARGE SCALE MRNA]</scope>
    <source>
        <tissue>Liver</tissue>
    </source>
</reference>
<reference key="7">
    <citation type="journal article" date="1994" name="DNA Cell Biol.">
        <title>Characterization of the proximal promoter and two silencer elements in the CYP2C11 gene expressed in rat liver.</title>
        <authorList>
            <person name="Stroem A."/>
            <person name="Eguchi H."/>
            <person name="Mode A."/>
            <person name="Legraverend C."/>
            <person name="Tollet P."/>
            <person name="Stroemstedt P.-E."/>
            <person name="Gustafsson J.-A."/>
        </authorList>
    </citation>
    <scope>NUCLEOTIDE SEQUENCE [GENOMIC DNA] OF 1-56</scope>
    <source>
        <strain>Sprague-Dawley</strain>
        <tissue>Liver</tissue>
    </source>
</reference>
<reference key="8">
    <citation type="submission" date="1999-07" db="EMBL/GenBank/DDBJ databases">
        <authorList>
            <person name="Stroem A."/>
        </authorList>
    </citation>
    <scope>SEQUENCE REVISION TO 12</scope>
</reference>
<reference key="9">
    <citation type="journal article" date="1986" name="J. Biochem.">
        <title>Purification and characterization of three male-specific and one female-specific forms of cytochrome P-450 from rat liver microsomes.</title>
        <authorList>
            <person name="Matsumoto T."/>
            <person name="Emi Y."/>
            <person name="Kawabata S."/>
            <person name="Omura T."/>
        </authorList>
    </citation>
    <scope>PROTEIN SEQUENCE OF 1-30</scope>
    <scope>FUNCTION</scope>
    <scope>CATALYTIC ACTIVITY</scope>
    <scope>PATHWAY</scope>
    <scope>SUBCELLULAR LOCATION</scope>
    <scope>TISSUE SPECIFICITY</scope>
</reference>
<reference key="10">
    <citation type="journal article" date="1999" name="J. Clin. Invest.">
        <title>The kidney cytochrome P-450 2C23 arachidonic acid epoxygenase is upregulated during dietary salt loading.</title>
        <authorList>
            <person name="Holla V.R."/>
            <person name="Makita K."/>
            <person name="Zaphiropoulos P.G."/>
            <person name="Capdevila J.H."/>
        </authorList>
    </citation>
    <scope>FUNCTION</scope>
    <scope>CATALYTIC ACTIVITY</scope>
    <scope>PATHWAY</scope>
    <scope>TISSUE SPECIFICITY</scope>
</reference>
<reference key="11">
    <citation type="journal article" date="2005" name="Biochem. Biophys. Res. Commun.">
        <title>Eicosapentaenoic acid metabolism by cytochrome P450 enzymes of the CYP2C subfamily.</title>
        <authorList>
            <person name="Barbosa-Sicard E."/>
            <person name="Markovic M."/>
            <person name="Honeck H."/>
            <person name="Christ B."/>
            <person name="Muller D.N."/>
            <person name="Schunck W.H."/>
        </authorList>
    </citation>
    <scope>FUNCTION</scope>
    <scope>CATALYTIC ACTIVITY</scope>
    <scope>BIOPHYSICOCHEMICAL PROPERTIES</scope>
</reference>
<comment type="function">
    <text evidence="2 3 4">A cytochrome P450 monooxygenase involved in the metabolism of steroid hormones and fatty acids. Catalyzes the hydroxylation of carbon-hydrogen bonds. Metabolizes testosterone to 2alpha- and 16alpha-hydroxytestosterone (PubMed:2434473). Catalyzes the epoxidation of double bonds of polyunsaturated fatty acids (PUFAs) (PubMed:10491410, PubMed:15766564). Converts arachidonic acid (ARA, C20:4(n-6)) primarily to epoxyeicosatrienoic acid (EET) regioisomers, 8,9-, 11,12-, and 14,15-EET, with both R,S and S,R stereochemistry (PubMed:10491410). Preferentially produces 11R,12S-EET enantiomer. To a lesser extent, catalyzes the hydroxylation of arachidonic acid producing hydroxyeicosatetraenoates (HETEs) (PubMed:10491410). Metabolizes eicosapentaenoic acid (EPA, C20:5(n-3)) to epoxyeicosatetraenoic acid (EETeTr) regioisomers, 8,9-, 11,12-, 14,15-, and 17,18-EETeTr, preferentially producing 17R,18S-EETeTr enantiomer (PubMed:15766564). Mechanistically, uses molecular oxygen inserting one oxygen atom into a substrate, and reducing the second into a water molecule, with two electrons provided by NADPH via cytochrome P450 reductase (NADPH--hemoprotein reductase) (PubMed:15766564, PubMed:2434473).</text>
</comment>
<comment type="catalytic activity">
    <reaction evidence="2 4">
        <text>an organic molecule + reduced [NADPH--hemoprotein reductase] + O2 = an alcohol + oxidized [NADPH--hemoprotein reductase] + H2O + H(+)</text>
        <dbReference type="Rhea" id="RHEA:17149"/>
        <dbReference type="Rhea" id="RHEA-COMP:11964"/>
        <dbReference type="Rhea" id="RHEA-COMP:11965"/>
        <dbReference type="ChEBI" id="CHEBI:15377"/>
        <dbReference type="ChEBI" id="CHEBI:15378"/>
        <dbReference type="ChEBI" id="CHEBI:15379"/>
        <dbReference type="ChEBI" id="CHEBI:30879"/>
        <dbReference type="ChEBI" id="CHEBI:57618"/>
        <dbReference type="ChEBI" id="CHEBI:58210"/>
        <dbReference type="ChEBI" id="CHEBI:142491"/>
        <dbReference type="EC" id="1.14.14.1"/>
    </reaction>
    <physiologicalReaction direction="left-to-right" evidence="8 10">
        <dbReference type="Rhea" id="RHEA:17150"/>
    </physiologicalReaction>
</comment>
<comment type="catalytic activity">
    <reaction evidence="4">
        <text>testosterone + reduced [NADPH--hemoprotein reductase] + O2 = 2alpha,17beta-dihydroxyandrost-4-en-3-one + oxidized [NADPH--hemoprotein reductase] + H2O + H(+)</text>
        <dbReference type="Rhea" id="RHEA:65276"/>
        <dbReference type="Rhea" id="RHEA-COMP:11964"/>
        <dbReference type="Rhea" id="RHEA-COMP:11965"/>
        <dbReference type="ChEBI" id="CHEBI:15377"/>
        <dbReference type="ChEBI" id="CHEBI:15378"/>
        <dbReference type="ChEBI" id="CHEBI:15379"/>
        <dbReference type="ChEBI" id="CHEBI:17347"/>
        <dbReference type="ChEBI" id="CHEBI:57618"/>
        <dbReference type="ChEBI" id="CHEBI:58210"/>
        <dbReference type="ChEBI" id="CHEBI:83025"/>
    </reaction>
    <physiologicalReaction direction="left-to-right" evidence="10">
        <dbReference type="Rhea" id="RHEA:65277"/>
    </physiologicalReaction>
</comment>
<comment type="catalytic activity">
    <reaction evidence="4">
        <text>testosterone + reduced [NADPH--hemoprotein reductase] + O2 = 16alpha,17beta-dihydroxyandrost-4-en-3-one + oxidized [NADPH--hemoprotein reductase] + H2O + H(+)</text>
        <dbReference type="Rhea" id="RHEA:53196"/>
        <dbReference type="Rhea" id="RHEA-COMP:11964"/>
        <dbReference type="Rhea" id="RHEA-COMP:11965"/>
        <dbReference type="ChEBI" id="CHEBI:15377"/>
        <dbReference type="ChEBI" id="CHEBI:15378"/>
        <dbReference type="ChEBI" id="CHEBI:15379"/>
        <dbReference type="ChEBI" id="CHEBI:17347"/>
        <dbReference type="ChEBI" id="CHEBI:34172"/>
        <dbReference type="ChEBI" id="CHEBI:57618"/>
        <dbReference type="ChEBI" id="CHEBI:58210"/>
    </reaction>
    <physiologicalReaction direction="left-to-right" evidence="10">
        <dbReference type="Rhea" id="RHEA:53197"/>
    </physiologicalReaction>
</comment>
<comment type="catalytic activity">
    <reaction evidence="2">
        <text>(5Z,8Z,11Z,14Z)-eicosatetraenoate + reduced [NADPH--hemoprotein reductase] + O2 = (8R,9S)-epoxy-(5Z,11Z,14Z)-eicosatrienoate + oxidized [NADPH--hemoprotein reductase] + H2O + H(+)</text>
        <dbReference type="Rhea" id="RHEA:49884"/>
        <dbReference type="Rhea" id="RHEA-COMP:11964"/>
        <dbReference type="Rhea" id="RHEA-COMP:11965"/>
        <dbReference type="ChEBI" id="CHEBI:15377"/>
        <dbReference type="ChEBI" id="CHEBI:15378"/>
        <dbReference type="ChEBI" id="CHEBI:15379"/>
        <dbReference type="ChEBI" id="CHEBI:32395"/>
        <dbReference type="ChEBI" id="CHEBI:57618"/>
        <dbReference type="ChEBI" id="CHEBI:58210"/>
        <dbReference type="ChEBI" id="CHEBI:131975"/>
    </reaction>
    <physiologicalReaction direction="left-to-right" evidence="8">
        <dbReference type="Rhea" id="RHEA:49885"/>
    </physiologicalReaction>
</comment>
<comment type="catalytic activity">
    <reaction evidence="2">
        <text>(5Z,8Z,11Z,14Z)-eicosatetraenoate + reduced [NADPH--hemoprotein reductase] + O2 = (8S,9R)-epoxy-(5Z,11Z,14Z)-eicosatrienoate + oxidized [NADPH--hemoprotein reductase] + H2O + H(+)</text>
        <dbReference type="Rhea" id="RHEA:49928"/>
        <dbReference type="Rhea" id="RHEA-COMP:11964"/>
        <dbReference type="Rhea" id="RHEA-COMP:11965"/>
        <dbReference type="ChEBI" id="CHEBI:15377"/>
        <dbReference type="ChEBI" id="CHEBI:15378"/>
        <dbReference type="ChEBI" id="CHEBI:15379"/>
        <dbReference type="ChEBI" id="CHEBI:32395"/>
        <dbReference type="ChEBI" id="CHEBI:57618"/>
        <dbReference type="ChEBI" id="CHEBI:58210"/>
        <dbReference type="ChEBI" id="CHEBI:131974"/>
    </reaction>
    <physiologicalReaction direction="left-to-right" evidence="8">
        <dbReference type="Rhea" id="RHEA:49929"/>
    </physiologicalReaction>
</comment>
<comment type="catalytic activity">
    <reaction evidence="2">
        <text>(5Z,8Z,11Z,14Z)-eicosatetraenoate + reduced [NADPH--hemoprotein reductase] + O2 = (11R,12S)-epoxy-(5Z,8Z,14Z)-eicosatrienoate + oxidized [NADPH--hemoprotein reductase] + H2O + H(+)</text>
        <dbReference type="Rhea" id="RHEA:49880"/>
        <dbReference type="Rhea" id="RHEA-COMP:11964"/>
        <dbReference type="Rhea" id="RHEA-COMP:11965"/>
        <dbReference type="ChEBI" id="CHEBI:15377"/>
        <dbReference type="ChEBI" id="CHEBI:15378"/>
        <dbReference type="ChEBI" id="CHEBI:15379"/>
        <dbReference type="ChEBI" id="CHEBI:32395"/>
        <dbReference type="ChEBI" id="CHEBI:57618"/>
        <dbReference type="ChEBI" id="CHEBI:58210"/>
        <dbReference type="ChEBI" id="CHEBI:131970"/>
    </reaction>
    <physiologicalReaction direction="left-to-right" evidence="8">
        <dbReference type="Rhea" id="RHEA:49881"/>
    </physiologicalReaction>
</comment>
<comment type="catalytic activity">
    <reaction evidence="2">
        <text>(5Z,8Z,11Z,14Z)-eicosatetraenoate + reduced [NADPH--hemoprotein reductase] + O2 = (11S,12R)-epoxy-(5Z,8Z,14Z)-eicosatrienoate + oxidized [NADPH--hemoprotein reductase] + H2O + H(+)</text>
        <dbReference type="Rhea" id="RHEA:49876"/>
        <dbReference type="Rhea" id="RHEA-COMP:11964"/>
        <dbReference type="Rhea" id="RHEA-COMP:11965"/>
        <dbReference type="ChEBI" id="CHEBI:15377"/>
        <dbReference type="ChEBI" id="CHEBI:15378"/>
        <dbReference type="ChEBI" id="CHEBI:15379"/>
        <dbReference type="ChEBI" id="CHEBI:32395"/>
        <dbReference type="ChEBI" id="CHEBI:57618"/>
        <dbReference type="ChEBI" id="CHEBI:58210"/>
        <dbReference type="ChEBI" id="CHEBI:131969"/>
    </reaction>
    <physiologicalReaction direction="left-to-right" evidence="8">
        <dbReference type="Rhea" id="RHEA:49877"/>
    </physiologicalReaction>
</comment>
<comment type="catalytic activity">
    <reaction evidence="2">
        <text>(5Z,8Z,11Z,14Z)-eicosatetraenoate + reduced [NADPH--hemoprotein reductase] + O2 = (14R,15S)-epoxy-(5Z,8Z,11Z)-eicosatrienoate + oxidized [NADPH--hemoprotein reductase] + H2O + H(+)</text>
        <dbReference type="Rhea" id="RHEA:49860"/>
        <dbReference type="Rhea" id="RHEA-COMP:11964"/>
        <dbReference type="Rhea" id="RHEA-COMP:11965"/>
        <dbReference type="ChEBI" id="CHEBI:15377"/>
        <dbReference type="ChEBI" id="CHEBI:15378"/>
        <dbReference type="ChEBI" id="CHEBI:15379"/>
        <dbReference type="ChEBI" id="CHEBI:32395"/>
        <dbReference type="ChEBI" id="CHEBI:57618"/>
        <dbReference type="ChEBI" id="CHEBI:58210"/>
        <dbReference type="ChEBI" id="CHEBI:131965"/>
    </reaction>
    <physiologicalReaction direction="left-to-right" evidence="8">
        <dbReference type="Rhea" id="RHEA:49861"/>
    </physiologicalReaction>
</comment>
<comment type="catalytic activity">
    <reaction evidence="2">
        <text>(5Z,8Z,11Z,14Z)-eicosatetraenoate + reduced [NADPH--hemoprotein reductase] + O2 = (14S,15R)-epoxy-(5Z,8Z,11Z)-eicosatrienoate + oxidized [NADPH--hemoprotein reductase] + H2O + H(+)</text>
        <dbReference type="Rhea" id="RHEA:49856"/>
        <dbReference type="Rhea" id="RHEA-COMP:11964"/>
        <dbReference type="Rhea" id="RHEA-COMP:11965"/>
        <dbReference type="ChEBI" id="CHEBI:15377"/>
        <dbReference type="ChEBI" id="CHEBI:15378"/>
        <dbReference type="ChEBI" id="CHEBI:15379"/>
        <dbReference type="ChEBI" id="CHEBI:32395"/>
        <dbReference type="ChEBI" id="CHEBI:57618"/>
        <dbReference type="ChEBI" id="CHEBI:58210"/>
        <dbReference type="ChEBI" id="CHEBI:131964"/>
    </reaction>
    <physiologicalReaction direction="left-to-right" evidence="8">
        <dbReference type="Rhea" id="RHEA:49857"/>
    </physiologicalReaction>
</comment>
<comment type="catalytic activity">
    <reaction evidence="3">
        <text>(5Z,8Z,11Z,14Z,17Z)-eicosapentaenoate + reduced [NADPH--hemoprotein reductase] + O2 = 8,9-epoxy-(5Z,11Z,14Z,17Z)-eicosatetraenoate + oxidized [NADPH--hemoprotein reductase] + H2O + H(+)</text>
        <dbReference type="Rhea" id="RHEA:52168"/>
        <dbReference type="Rhea" id="RHEA-COMP:11964"/>
        <dbReference type="Rhea" id="RHEA-COMP:11965"/>
        <dbReference type="ChEBI" id="CHEBI:15377"/>
        <dbReference type="ChEBI" id="CHEBI:15378"/>
        <dbReference type="ChEBI" id="CHEBI:15379"/>
        <dbReference type="ChEBI" id="CHEBI:57618"/>
        <dbReference type="ChEBI" id="CHEBI:58210"/>
        <dbReference type="ChEBI" id="CHEBI:58562"/>
        <dbReference type="ChEBI" id="CHEBI:136439"/>
    </reaction>
    <physiologicalReaction direction="left-to-right" evidence="9">
        <dbReference type="Rhea" id="RHEA:52169"/>
    </physiologicalReaction>
</comment>
<comment type="catalytic activity">
    <reaction evidence="3">
        <text>(5Z,8Z,11Z,14Z,17Z)-eicosapentaenoate + reduced [NADPH--hemoprotein reductase] + O2 = 11,12-epoxy-(5Z,8Z,14Z,17Z)-eicosatetraenoate + oxidized [NADPH--hemoprotein reductase] + H2O + H(+)</text>
        <dbReference type="Rhea" id="RHEA:52172"/>
        <dbReference type="Rhea" id="RHEA-COMP:11964"/>
        <dbReference type="Rhea" id="RHEA-COMP:11965"/>
        <dbReference type="ChEBI" id="CHEBI:15377"/>
        <dbReference type="ChEBI" id="CHEBI:15378"/>
        <dbReference type="ChEBI" id="CHEBI:15379"/>
        <dbReference type="ChEBI" id="CHEBI:57618"/>
        <dbReference type="ChEBI" id="CHEBI:58210"/>
        <dbReference type="ChEBI" id="CHEBI:58562"/>
        <dbReference type="ChEBI" id="CHEBI:136441"/>
    </reaction>
    <physiologicalReaction direction="left-to-right" evidence="9">
        <dbReference type="Rhea" id="RHEA:52173"/>
    </physiologicalReaction>
</comment>
<comment type="catalytic activity">
    <reaction evidence="3">
        <text>(5Z,8Z,11Z,14Z,17Z)-eicosapentaenoate + reduced [NADPH--hemoprotein reductase] + O2 = 14,15-epoxy-(5Z,8Z,11Z,17Z)-eicosatetraenoate + oxidized [NADPH--hemoprotein reductase] + H2O + H(+)</text>
        <dbReference type="Rhea" id="RHEA:52176"/>
        <dbReference type="Rhea" id="RHEA-COMP:11964"/>
        <dbReference type="Rhea" id="RHEA-COMP:11965"/>
        <dbReference type="ChEBI" id="CHEBI:15377"/>
        <dbReference type="ChEBI" id="CHEBI:15378"/>
        <dbReference type="ChEBI" id="CHEBI:15379"/>
        <dbReference type="ChEBI" id="CHEBI:57618"/>
        <dbReference type="ChEBI" id="CHEBI:58210"/>
        <dbReference type="ChEBI" id="CHEBI:58562"/>
        <dbReference type="ChEBI" id="CHEBI:136443"/>
    </reaction>
    <physiologicalReaction direction="left-to-right" evidence="9">
        <dbReference type="Rhea" id="RHEA:52177"/>
    </physiologicalReaction>
</comment>
<comment type="catalytic activity">
    <reaction evidence="3">
        <text>(5Z,8Z,11Z,14Z,17Z)-eicosapentaenoate + reduced [NADPH--hemoprotein reductase] + O2 = (17S,18R)-epoxy-(5Z,8Z,11Z,14Z)-eicosatetraenoate + oxidized [NADPH--hemoprotein reductase] + H2O + H(+)</text>
        <dbReference type="Rhea" id="RHEA:39783"/>
        <dbReference type="Rhea" id="RHEA-COMP:11964"/>
        <dbReference type="Rhea" id="RHEA-COMP:11965"/>
        <dbReference type="ChEBI" id="CHEBI:15377"/>
        <dbReference type="ChEBI" id="CHEBI:15378"/>
        <dbReference type="ChEBI" id="CHEBI:15379"/>
        <dbReference type="ChEBI" id="CHEBI:57618"/>
        <dbReference type="ChEBI" id="CHEBI:58210"/>
        <dbReference type="ChEBI" id="CHEBI:58562"/>
        <dbReference type="ChEBI" id="CHEBI:76635"/>
    </reaction>
    <physiologicalReaction direction="left-to-right" evidence="9">
        <dbReference type="Rhea" id="RHEA:39784"/>
    </physiologicalReaction>
</comment>
<comment type="catalytic activity">
    <reaction evidence="3">
        <text>(5Z,8Z,11Z,14Z,17Z)-eicosapentaenoate + reduced [NADPH--hemoprotein reductase] + O2 = (17R,18S)-epoxy-(5Z,8Z,11Z,14Z)-eicosatetraenoate + oxidized [NADPH--hemoprotein reductase] + H2O + H(+)</text>
        <dbReference type="Rhea" id="RHEA:39779"/>
        <dbReference type="Rhea" id="RHEA-COMP:11964"/>
        <dbReference type="Rhea" id="RHEA-COMP:11965"/>
        <dbReference type="ChEBI" id="CHEBI:15377"/>
        <dbReference type="ChEBI" id="CHEBI:15378"/>
        <dbReference type="ChEBI" id="CHEBI:15379"/>
        <dbReference type="ChEBI" id="CHEBI:57618"/>
        <dbReference type="ChEBI" id="CHEBI:58210"/>
        <dbReference type="ChEBI" id="CHEBI:58562"/>
        <dbReference type="ChEBI" id="CHEBI:76634"/>
    </reaction>
    <physiologicalReaction direction="left-to-right" evidence="9">
        <dbReference type="Rhea" id="RHEA:39780"/>
    </physiologicalReaction>
</comment>
<comment type="cofactor">
    <cofactor evidence="1">
        <name>heme</name>
        <dbReference type="ChEBI" id="CHEBI:30413"/>
    </cofactor>
</comment>
<comment type="biophysicochemical properties">
    <kinetics>
        <KM evidence="3">4.5 uM for (5Z,8Z,11Z,14Z)-eicosatetraenoate (total epoxygenase activity)</KM>
        <KM evidence="3">9.5 uM for (5Z,8Z,11Z,14Z,17Z)-eicosapentaenoate (total epoxygenase activity)</KM>
        <Vmax evidence="3">5.8 nmol/min/nmol enzyme toward (5Z,8Z,11Z,14Z)-eicosatetraenoate (total epoxygenase activity)</Vmax>
        <Vmax evidence="3">14.6 nmol/min/nmol enzyme toward (5Z,8Z,11Z,14Z,17Z)-eicosapentaenoate (total epoxygenase activity)</Vmax>
    </kinetics>
</comment>
<comment type="pathway">
    <text evidence="8">Lipid metabolism; arachidonate metabolism.</text>
</comment>
<comment type="pathway">
    <text evidence="10">Steroid metabolism.</text>
</comment>
<comment type="subcellular location">
    <subcellularLocation>
        <location evidence="4">Endoplasmic reticulum membrane</location>
        <topology>Peripheral membrane protein</topology>
    </subcellularLocation>
    <subcellularLocation>
        <location evidence="4">Microsome membrane</location>
        <topology>Peripheral membrane protein</topology>
    </subcellularLocation>
</comment>
<comment type="tissue specificity">
    <text evidence="2 4">Liver and kidney; male-specific.</text>
</comment>
<comment type="similarity">
    <text evidence="7">Belongs to the cytochrome P450 family.</text>
</comment>